<keyword id="KW-0067">ATP-binding</keyword>
<keyword id="KW-0173">Coenzyme A biosynthesis</keyword>
<keyword id="KW-0963">Cytoplasm</keyword>
<keyword id="KW-0418">Kinase</keyword>
<keyword id="KW-0547">Nucleotide-binding</keyword>
<keyword id="KW-1185">Reference proteome</keyword>
<keyword id="KW-0808">Transferase</keyword>
<comment type="function">
    <text evidence="1">Catalyzes the phosphorylation of the 3'-hydroxyl group of dephosphocoenzyme A to form coenzyme A.</text>
</comment>
<comment type="catalytic activity">
    <reaction evidence="1">
        <text>3'-dephospho-CoA + ATP = ADP + CoA + H(+)</text>
        <dbReference type="Rhea" id="RHEA:18245"/>
        <dbReference type="ChEBI" id="CHEBI:15378"/>
        <dbReference type="ChEBI" id="CHEBI:30616"/>
        <dbReference type="ChEBI" id="CHEBI:57287"/>
        <dbReference type="ChEBI" id="CHEBI:57328"/>
        <dbReference type="ChEBI" id="CHEBI:456216"/>
        <dbReference type="EC" id="2.7.1.24"/>
    </reaction>
</comment>
<comment type="pathway">
    <text evidence="1">Cofactor biosynthesis; coenzyme A biosynthesis; CoA from (R)-pantothenate: step 5/5.</text>
</comment>
<comment type="subcellular location">
    <subcellularLocation>
        <location evidence="1">Cytoplasm</location>
    </subcellularLocation>
</comment>
<comment type="similarity">
    <text evidence="1">Belongs to the CoaE family.</text>
</comment>
<feature type="chain" id="PRO_0000243266" description="Dephospho-CoA kinase">
    <location>
        <begin position="1"/>
        <end position="200"/>
    </location>
</feature>
<feature type="domain" description="DPCK" evidence="1">
    <location>
        <begin position="3"/>
        <end position="200"/>
    </location>
</feature>
<feature type="binding site" evidence="1">
    <location>
        <begin position="11"/>
        <end position="16"/>
    </location>
    <ligand>
        <name>ATP</name>
        <dbReference type="ChEBI" id="CHEBI:30616"/>
    </ligand>
</feature>
<accession>Q2YR03</accession>
<organism>
    <name type="scientific">Brucella abortus (strain 2308)</name>
    <dbReference type="NCBI Taxonomy" id="359391"/>
    <lineage>
        <taxon>Bacteria</taxon>
        <taxon>Pseudomonadati</taxon>
        <taxon>Pseudomonadota</taxon>
        <taxon>Alphaproteobacteria</taxon>
        <taxon>Hyphomicrobiales</taxon>
        <taxon>Brucellaceae</taxon>
        <taxon>Brucella/Ochrobactrum group</taxon>
        <taxon>Brucella</taxon>
    </lineage>
</organism>
<name>COAE_BRUA2</name>
<evidence type="ECO:0000255" key="1">
    <source>
        <dbReference type="HAMAP-Rule" id="MF_00376"/>
    </source>
</evidence>
<dbReference type="EC" id="2.7.1.24" evidence="1"/>
<dbReference type="EMBL" id="AM040264">
    <property type="protein sequence ID" value="CAJ12027.1"/>
    <property type="molecule type" value="Genomic_DNA"/>
</dbReference>
<dbReference type="RefSeq" id="WP_002965134.1">
    <property type="nucleotide sequence ID" value="NZ_KN046823.1"/>
</dbReference>
<dbReference type="SMR" id="Q2YR03"/>
<dbReference type="STRING" id="359391.BAB1_2071"/>
<dbReference type="GeneID" id="93017619"/>
<dbReference type="KEGG" id="bmf:BAB1_2071"/>
<dbReference type="PATRIC" id="fig|359391.11.peg.1304"/>
<dbReference type="HOGENOM" id="CLU_057180_3_0_5"/>
<dbReference type="PhylomeDB" id="Q2YR03"/>
<dbReference type="UniPathway" id="UPA00241">
    <property type="reaction ID" value="UER00356"/>
</dbReference>
<dbReference type="Proteomes" id="UP000002719">
    <property type="component" value="Chromosome I"/>
</dbReference>
<dbReference type="GO" id="GO:0005737">
    <property type="term" value="C:cytoplasm"/>
    <property type="evidence" value="ECO:0007669"/>
    <property type="project" value="UniProtKB-SubCell"/>
</dbReference>
<dbReference type="GO" id="GO:0005524">
    <property type="term" value="F:ATP binding"/>
    <property type="evidence" value="ECO:0007669"/>
    <property type="project" value="UniProtKB-UniRule"/>
</dbReference>
<dbReference type="GO" id="GO:0004140">
    <property type="term" value="F:dephospho-CoA kinase activity"/>
    <property type="evidence" value="ECO:0007669"/>
    <property type="project" value="UniProtKB-UniRule"/>
</dbReference>
<dbReference type="GO" id="GO:0015937">
    <property type="term" value="P:coenzyme A biosynthetic process"/>
    <property type="evidence" value="ECO:0007669"/>
    <property type="project" value="UniProtKB-UniRule"/>
</dbReference>
<dbReference type="CDD" id="cd02022">
    <property type="entry name" value="DPCK"/>
    <property type="match status" value="1"/>
</dbReference>
<dbReference type="Gene3D" id="3.40.50.300">
    <property type="entry name" value="P-loop containing nucleotide triphosphate hydrolases"/>
    <property type="match status" value="1"/>
</dbReference>
<dbReference type="HAMAP" id="MF_00376">
    <property type="entry name" value="Dephospho_CoA_kinase"/>
    <property type="match status" value="1"/>
</dbReference>
<dbReference type="InterPro" id="IPR001977">
    <property type="entry name" value="Depp_CoAkinase"/>
</dbReference>
<dbReference type="InterPro" id="IPR027417">
    <property type="entry name" value="P-loop_NTPase"/>
</dbReference>
<dbReference type="NCBIfam" id="TIGR00152">
    <property type="entry name" value="dephospho-CoA kinase"/>
    <property type="match status" value="1"/>
</dbReference>
<dbReference type="PANTHER" id="PTHR10695:SF46">
    <property type="entry name" value="BIFUNCTIONAL COENZYME A SYNTHASE-RELATED"/>
    <property type="match status" value="1"/>
</dbReference>
<dbReference type="PANTHER" id="PTHR10695">
    <property type="entry name" value="DEPHOSPHO-COA KINASE-RELATED"/>
    <property type="match status" value="1"/>
</dbReference>
<dbReference type="Pfam" id="PF01121">
    <property type="entry name" value="CoaE"/>
    <property type="match status" value="1"/>
</dbReference>
<dbReference type="SUPFAM" id="SSF52540">
    <property type="entry name" value="P-loop containing nucleoside triphosphate hydrolases"/>
    <property type="match status" value="1"/>
</dbReference>
<dbReference type="PROSITE" id="PS51219">
    <property type="entry name" value="DPCK"/>
    <property type="match status" value="1"/>
</dbReference>
<gene>
    <name evidence="1" type="primary">coaE</name>
    <name type="ordered locus">BAB1_2071</name>
</gene>
<reference key="1">
    <citation type="journal article" date="2005" name="Infect. Immun.">
        <title>Whole-genome analyses of speciation events in pathogenic Brucellae.</title>
        <authorList>
            <person name="Chain P.S."/>
            <person name="Comerci D.J."/>
            <person name="Tolmasky M.E."/>
            <person name="Larimer F.W."/>
            <person name="Malfatti S.A."/>
            <person name="Vergez L.M."/>
            <person name="Aguero F."/>
            <person name="Land M.L."/>
            <person name="Ugalde R.A."/>
            <person name="Garcia E."/>
        </authorList>
    </citation>
    <scope>NUCLEOTIDE SEQUENCE [LARGE SCALE GENOMIC DNA]</scope>
    <source>
        <strain>2308</strain>
    </source>
</reference>
<sequence>MIVLGLTGSIGMGKTTAAGMFAEAGVPVYSADDAVHRLYSGRAAPLIEATFPGTVENGIVNREKLFKAVIGQPEAIKKLEAVVHPLVREEEDAFRREAEKSGAAIALVDIPLLFETGAEKRVDKVVVVSAPADIQHTRVLARPGMTQEKLKAILLRQIPDAEKRSRADFVLDTSGSFDDLRRQIAEIITGLSGKPAAATR</sequence>
<protein>
    <recommendedName>
        <fullName evidence="1">Dephospho-CoA kinase</fullName>
        <ecNumber evidence="1">2.7.1.24</ecNumber>
    </recommendedName>
    <alternativeName>
        <fullName evidence="1">Dephosphocoenzyme A kinase</fullName>
    </alternativeName>
</protein>
<proteinExistence type="inferred from homology"/>